<proteinExistence type="evidence at protein level"/>
<accession>P06742</accession>
<accession>P06743</accession>
<accession>P92155</accession>
<accession>P92156</accession>
<accession>P92157</accession>
<accession>P92183</accession>
<accession>P92187</accession>
<accession>P92196</accession>
<accession>Q24380</accession>
<accession>Q24381</accession>
<accession>Q24382</accession>
<accession>Q24383</accession>
<accession>Q27304</accession>
<accession>Q27315</accession>
<accession>Q27381</accession>
<accession>Q27414</accession>
<accession>Q94988</accession>
<accession>Q9VB12</accession>
<feature type="chain" id="PRO_0000198709" description="Myosin light chain alkali">
    <location>
        <begin position="1"/>
        <end position="155"/>
    </location>
</feature>
<feature type="domain" description="EF-hand 1" evidence="1">
    <location>
        <begin position="7"/>
        <end position="41"/>
    </location>
</feature>
<feature type="domain" description="EF-hand 2" evidence="1">
    <location>
        <begin position="80"/>
        <end position="115"/>
    </location>
</feature>
<feature type="splice variant" id="VSP_003367" description="In isoform Indirect flight muscle." evidence="5">
    <original>QFVQRLMSDPVVFD</original>
    <variation>PFLARMCDRPDQLK</variation>
    <location>
        <begin position="142"/>
        <end position="155"/>
    </location>
</feature>
<feature type="sequence conflict" description="In Ref. 1." evidence="5" ref="1">
    <original>A</original>
    <variation>V</variation>
    <location>
        <position position="2"/>
    </location>
</feature>
<feature type="sequence conflict" description="In Ref. 6; AAA53454/AAA53458/AAA53460/AAA53466/AAA53468." evidence="5" ref="6">
    <original>L</original>
    <variation>M</variation>
    <location>
        <position position="67"/>
    </location>
</feature>
<feature type="sequence conflict" description="In Ref. 1." evidence="5" ref="1">
    <original>D</original>
    <variation>H</variation>
    <location>
        <position position="150"/>
    </location>
</feature>
<feature type="helix" evidence="6">
    <location>
        <begin position="6"/>
        <end position="19"/>
    </location>
</feature>
<feature type="turn" evidence="6">
    <location>
        <begin position="22"/>
        <end position="24"/>
    </location>
</feature>
<feature type="strand" evidence="6">
    <location>
        <begin position="25"/>
        <end position="27"/>
    </location>
</feature>
<feature type="helix" evidence="6">
    <location>
        <begin position="28"/>
        <end position="30"/>
    </location>
</feature>
<feature type="helix" evidence="6">
    <location>
        <begin position="31"/>
        <end position="37"/>
    </location>
</feature>
<feature type="helix" evidence="6">
    <location>
        <begin position="44"/>
        <end position="49"/>
    </location>
</feature>
<feature type="helix" evidence="6">
    <location>
        <begin position="63"/>
        <end position="75"/>
    </location>
</feature>
<feature type="helix" evidence="6">
    <location>
        <begin position="82"/>
        <end position="89"/>
    </location>
</feature>
<feature type="helix" evidence="6">
    <location>
        <begin position="90"/>
        <end position="92"/>
    </location>
</feature>
<feature type="strand" evidence="6">
    <location>
        <begin position="96"/>
        <end position="101"/>
    </location>
</feature>
<feature type="helix" evidence="6">
    <location>
        <begin position="102"/>
        <end position="111"/>
    </location>
</feature>
<feature type="strand" evidence="6">
    <location>
        <begin position="112"/>
        <end position="114"/>
    </location>
</feature>
<feature type="helix" evidence="6">
    <location>
        <begin position="118"/>
        <end position="128"/>
    </location>
</feature>
<feature type="strand" evidence="6">
    <location>
        <begin position="134"/>
        <end position="139"/>
    </location>
</feature>
<feature type="helix" evidence="6">
    <location>
        <begin position="140"/>
        <end position="147"/>
    </location>
</feature>
<comment type="subunit">
    <text>Myosin is a hexamer of 2 heavy chains and 4 light chains.</text>
</comment>
<comment type="alternative products">
    <event type="alternative splicing"/>
    <isoform>
        <id>P06742-1</id>
        <name>Larval-adult</name>
        <name>Larval-non-IFM</name>
        <sequence type="displayed"/>
    </isoform>
    <isoform>
        <id>P06742-2</id>
        <name>Indirect flight muscle</name>
        <name>Pupa</name>
        <name>Adult flight muscle</name>
        <sequence type="described" ref="VSP_003367"/>
    </isoform>
</comment>
<comment type="tissue specificity">
    <text evidence="3 4">Indirect flight muscle isoform is found only in the indirect flight muscles. The larval and adult isoform is present in the larval and adult musculature.</text>
</comment>
<comment type="developmental stage">
    <text evidence="2 4">Expressed during late embryogenesis, larval instars, late stages of pupariation and adult.</text>
</comment>
<gene>
    <name type="primary">Mlc1</name>
    <name type="synonym">MLC-ALK</name>
    <name type="ORF">CG5596</name>
</gene>
<evidence type="ECO:0000255" key="1">
    <source>
        <dbReference type="PROSITE-ProRule" id="PRU00448"/>
    </source>
</evidence>
<evidence type="ECO:0000269" key="2">
    <source>
    </source>
</evidence>
<evidence type="ECO:0000269" key="3">
    <source>
    </source>
</evidence>
<evidence type="ECO:0000269" key="4">
    <source>
    </source>
</evidence>
<evidence type="ECO:0000305" key="5"/>
<evidence type="ECO:0007829" key="6">
    <source>
        <dbReference type="PDB" id="5W1A"/>
    </source>
</evidence>
<reference key="1">
    <citation type="journal article" date="1985" name="Proc. Natl. Acad. Sci. U.S.A.">
        <title>Developmental variations in the splicing pattern of transcripts from the Drosophila gene encoding myosin alkali light chain result in different carboxyl-terminal amino acid sequences.</title>
        <authorList>
            <person name="Falkenthal S."/>
            <person name="Parker V.P."/>
            <person name="Davidson N."/>
        </authorList>
    </citation>
    <scope>NUCLEOTIDE SEQUENCE [GENOMIC DNA]</scope>
    <scope>ALTERNATIVE SPLICING</scope>
    <scope>DEVELOPMENTAL STAGE</scope>
    <source>
        <tissue>Embryo</tissue>
        <tissue>Larva</tissue>
        <tissue>Pupae</tissue>
    </source>
</reference>
<reference key="2">
    <citation type="journal article" date="1984" name="Mol. Cell. Biol.">
        <title>Drosophila melanogaster has only one myosin alkali light-chain gene which encodes a protein with considerable amino acid sequence homology to chicken myosin alkali light chains.</title>
        <authorList>
            <person name="Falkenthal S."/>
            <person name="Parker V.P."/>
            <person name="Mattox W.W."/>
            <person name="Davidson N."/>
        </authorList>
    </citation>
    <scope>NUCLEOTIDE SEQUENCE [MRNA] (ISOFORM LARVAL-ADULT)</scope>
    <scope>DEVELOPMENTAL STAGE</scope>
    <scope>TISSUE SPECIFICITY</scope>
    <source>
        <strain>Canton-S</strain>
        <tissue>Embryo</tissue>
        <tissue>Flight muscle</tissue>
        <tissue>Pupae</tissue>
    </source>
</reference>
<reference key="3">
    <citation type="journal article" date="2000" name="Science">
        <title>The genome sequence of Drosophila melanogaster.</title>
        <authorList>
            <person name="Adams M.D."/>
            <person name="Celniker S.E."/>
            <person name="Holt R.A."/>
            <person name="Evans C.A."/>
            <person name="Gocayne J.D."/>
            <person name="Amanatides P.G."/>
            <person name="Scherer S.E."/>
            <person name="Li P.W."/>
            <person name="Hoskins R.A."/>
            <person name="Galle R.F."/>
            <person name="George R.A."/>
            <person name="Lewis S.E."/>
            <person name="Richards S."/>
            <person name="Ashburner M."/>
            <person name="Henderson S.N."/>
            <person name="Sutton G.G."/>
            <person name="Wortman J.R."/>
            <person name="Yandell M.D."/>
            <person name="Zhang Q."/>
            <person name="Chen L.X."/>
            <person name="Brandon R.C."/>
            <person name="Rogers Y.-H.C."/>
            <person name="Blazej R.G."/>
            <person name="Champe M."/>
            <person name="Pfeiffer B.D."/>
            <person name="Wan K.H."/>
            <person name="Doyle C."/>
            <person name="Baxter E.G."/>
            <person name="Helt G."/>
            <person name="Nelson C.R."/>
            <person name="Miklos G.L.G."/>
            <person name="Abril J.F."/>
            <person name="Agbayani A."/>
            <person name="An H.-J."/>
            <person name="Andrews-Pfannkoch C."/>
            <person name="Baldwin D."/>
            <person name="Ballew R.M."/>
            <person name="Basu A."/>
            <person name="Baxendale J."/>
            <person name="Bayraktaroglu L."/>
            <person name="Beasley E.M."/>
            <person name="Beeson K.Y."/>
            <person name="Benos P.V."/>
            <person name="Berman B.P."/>
            <person name="Bhandari D."/>
            <person name="Bolshakov S."/>
            <person name="Borkova D."/>
            <person name="Botchan M.R."/>
            <person name="Bouck J."/>
            <person name="Brokstein P."/>
            <person name="Brottier P."/>
            <person name="Burtis K.C."/>
            <person name="Busam D.A."/>
            <person name="Butler H."/>
            <person name="Cadieu E."/>
            <person name="Center A."/>
            <person name="Chandra I."/>
            <person name="Cherry J.M."/>
            <person name="Cawley S."/>
            <person name="Dahlke C."/>
            <person name="Davenport L.B."/>
            <person name="Davies P."/>
            <person name="de Pablos B."/>
            <person name="Delcher A."/>
            <person name="Deng Z."/>
            <person name="Mays A.D."/>
            <person name="Dew I."/>
            <person name="Dietz S.M."/>
            <person name="Dodson K."/>
            <person name="Doup L.E."/>
            <person name="Downes M."/>
            <person name="Dugan-Rocha S."/>
            <person name="Dunkov B.C."/>
            <person name="Dunn P."/>
            <person name="Durbin K.J."/>
            <person name="Evangelista C.C."/>
            <person name="Ferraz C."/>
            <person name="Ferriera S."/>
            <person name="Fleischmann W."/>
            <person name="Fosler C."/>
            <person name="Gabrielian A.E."/>
            <person name="Garg N.S."/>
            <person name="Gelbart W.M."/>
            <person name="Glasser K."/>
            <person name="Glodek A."/>
            <person name="Gong F."/>
            <person name="Gorrell J.H."/>
            <person name="Gu Z."/>
            <person name="Guan P."/>
            <person name="Harris M."/>
            <person name="Harris N.L."/>
            <person name="Harvey D.A."/>
            <person name="Heiman T.J."/>
            <person name="Hernandez J.R."/>
            <person name="Houck J."/>
            <person name="Hostin D."/>
            <person name="Houston K.A."/>
            <person name="Howland T.J."/>
            <person name="Wei M.-H."/>
            <person name="Ibegwam C."/>
            <person name="Jalali M."/>
            <person name="Kalush F."/>
            <person name="Karpen G.H."/>
            <person name="Ke Z."/>
            <person name="Kennison J.A."/>
            <person name="Ketchum K.A."/>
            <person name="Kimmel B.E."/>
            <person name="Kodira C.D."/>
            <person name="Kraft C.L."/>
            <person name="Kravitz S."/>
            <person name="Kulp D."/>
            <person name="Lai Z."/>
            <person name="Lasko P."/>
            <person name="Lei Y."/>
            <person name="Levitsky A.A."/>
            <person name="Li J.H."/>
            <person name="Li Z."/>
            <person name="Liang Y."/>
            <person name="Lin X."/>
            <person name="Liu X."/>
            <person name="Mattei B."/>
            <person name="McIntosh T.C."/>
            <person name="McLeod M.P."/>
            <person name="McPherson D."/>
            <person name="Merkulov G."/>
            <person name="Milshina N.V."/>
            <person name="Mobarry C."/>
            <person name="Morris J."/>
            <person name="Moshrefi A."/>
            <person name="Mount S.M."/>
            <person name="Moy M."/>
            <person name="Murphy B."/>
            <person name="Murphy L."/>
            <person name="Muzny D.M."/>
            <person name="Nelson D.L."/>
            <person name="Nelson D.R."/>
            <person name="Nelson K.A."/>
            <person name="Nixon K."/>
            <person name="Nusskern D.R."/>
            <person name="Pacleb J.M."/>
            <person name="Palazzolo M."/>
            <person name="Pittman G.S."/>
            <person name="Pan S."/>
            <person name="Pollard J."/>
            <person name="Puri V."/>
            <person name="Reese M.G."/>
            <person name="Reinert K."/>
            <person name="Remington K."/>
            <person name="Saunders R.D.C."/>
            <person name="Scheeler F."/>
            <person name="Shen H."/>
            <person name="Shue B.C."/>
            <person name="Siden-Kiamos I."/>
            <person name="Simpson M."/>
            <person name="Skupski M.P."/>
            <person name="Smith T.J."/>
            <person name="Spier E."/>
            <person name="Spradling A.C."/>
            <person name="Stapleton M."/>
            <person name="Strong R."/>
            <person name="Sun E."/>
            <person name="Svirskas R."/>
            <person name="Tector C."/>
            <person name="Turner R."/>
            <person name="Venter E."/>
            <person name="Wang A.H."/>
            <person name="Wang X."/>
            <person name="Wang Z.-Y."/>
            <person name="Wassarman D.A."/>
            <person name="Weinstock G.M."/>
            <person name="Weissenbach J."/>
            <person name="Williams S.M."/>
            <person name="Woodage T."/>
            <person name="Worley K.C."/>
            <person name="Wu D."/>
            <person name="Yang S."/>
            <person name="Yao Q.A."/>
            <person name="Ye J."/>
            <person name="Yeh R.-F."/>
            <person name="Zaveri J.S."/>
            <person name="Zhan M."/>
            <person name="Zhang G."/>
            <person name="Zhao Q."/>
            <person name="Zheng L."/>
            <person name="Zheng X.H."/>
            <person name="Zhong F.N."/>
            <person name="Zhong W."/>
            <person name="Zhou X."/>
            <person name="Zhu S.C."/>
            <person name="Zhu X."/>
            <person name="Smith H.O."/>
            <person name="Gibbs R.A."/>
            <person name="Myers E.W."/>
            <person name="Rubin G.M."/>
            <person name="Venter J.C."/>
        </authorList>
    </citation>
    <scope>NUCLEOTIDE SEQUENCE [LARGE SCALE GENOMIC DNA]</scope>
    <source>
        <strain>Berkeley</strain>
    </source>
</reference>
<reference key="4">
    <citation type="journal article" date="2002" name="Genome Biol.">
        <title>Annotation of the Drosophila melanogaster euchromatic genome: a systematic review.</title>
        <authorList>
            <person name="Misra S."/>
            <person name="Crosby M.A."/>
            <person name="Mungall C.J."/>
            <person name="Matthews B.B."/>
            <person name="Campbell K.S."/>
            <person name="Hradecky P."/>
            <person name="Huang Y."/>
            <person name="Kaminker J.S."/>
            <person name="Millburn G.H."/>
            <person name="Prochnik S.E."/>
            <person name="Smith C.D."/>
            <person name="Tupy J.L."/>
            <person name="Whitfield E.J."/>
            <person name="Bayraktaroglu L."/>
            <person name="Berman B.P."/>
            <person name="Bettencourt B.R."/>
            <person name="Celniker S.E."/>
            <person name="de Grey A.D.N.J."/>
            <person name="Drysdale R.A."/>
            <person name="Harris N.L."/>
            <person name="Richter J."/>
            <person name="Russo S."/>
            <person name="Schroeder A.J."/>
            <person name="Shu S.Q."/>
            <person name="Stapleton M."/>
            <person name="Yamada C."/>
            <person name="Ashburner M."/>
            <person name="Gelbart W.M."/>
            <person name="Rubin G.M."/>
            <person name="Lewis S.E."/>
        </authorList>
    </citation>
    <scope>GENOME REANNOTATION</scope>
    <scope>ALTERNATIVE SPLICING</scope>
    <source>
        <strain>Berkeley</strain>
    </source>
</reference>
<reference key="5">
    <citation type="journal article" date="2002" name="Genome Biol.">
        <title>A Drosophila full-length cDNA resource.</title>
        <authorList>
            <person name="Stapleton M."/>
            <person name="Carlson J.W."/>
            <person name="Brokstein P."/>
            <person name="Yu C."/>
            <person name="Champe M."/>
            <person name="George R.A."/>
            <person name="Guarin H."/>
            <person name="Kronmiller B."/>
            <person name="Pacleb J.M."/>
            <person name="Park S."/>
            <person name="Wan K.H."/>
            <person name="Rubin G.M."/>
            <person name="Celniker S.E."/>
        </authorList>
    </citation>
    <scope>NUCLEOTIDE SEQUENCE [LARGE SCALE MRNA] (ISOFORM LARVAL-ADULT)</scope>
    <source>
        <strain>Berkeley</strain>
        <tissue>Embryo</tissue>
    </source>
</reference>
<reference key="6">
    <citation type="journal article" date="1995" name="Genetics">
        <title>Constraints on intron evolution in the gene encoding the myosin alkali light chain in Drosophila.</title>
        <authorList>
            <person name="Leicht B.G."/>
            <person name="Muse S.V."/>
            <person name="Hanczyc M."/>
            <person name="Clark A.G."/>
        </authorList>
    </citation>
    <scope>NUCLEOTIDE SEQUENCE [GENOMIC DNA] OF 62-155</scope>
    <scope>ALTERNATIVE SPLICING</scope>
    <source>
        <strain>M171</strain>
        <strain>M174</strain>
        <strain>M179</strain>
        <strain>M180</strain>
        <strain>M192</strain>
        <strain>M219</strain>
        <strain>M223</strain>
        <strain>M234</strain>
        <strain>M237</strain>
        <strain>M240</strain>
        <strain>M241N</strain>
        <strain>M242</strain>
        <strain>M245</strain>
        <strain>M247</strain>
        <strain>M249</strain>
        <strain>M86</strain>
    </source>
</reference>
<reference key="7">
    <citation type="journal article" date="1987" name="Dev. Biol.">
        <title>The indirect flight muscle of Drosophila accumulates a unique myosin alkali light chain isoform.</title>
        <authorList>
            <person name="Falkenthal S."/>
            <person name="Graham M."/>
            <person name="Wilkinson J."/>
        </authorList>
    </citation>
    <scope>ALTERNATIVE SPLICING</scope>
    <scope>TISSUE SPECIFICITY</scope>
    <source>
        <tissue>Abdomen</tissue>
        <tissue>Flight muscle</tissue>
        <tissue>Head</tissue>
        <tissue>Muscle</tissue>
        <tissue>Pupae</tissue>
    </source>
</reference>
<organism>
    <name type="scientific">Drosophila melanogaster</name>
    <name type="common">Fruit fly</name>
    <dbReference type="NCBI Taxonomy" id="7227"/>
    <lineage>
        <taxon>Eukaryota</taxon>
        <taxon>Metazoa</taxon>
        <taxon>Ecdysozoa</taxon>
        <taxon>Arthropoda</taxon>
        <taxon>Hexapoda</taxon>
        <taxon>Insecta</taxon>
        <taxon>Pterygota</taxon>
        <taxon>Neoptera</taxon>
        <taxon>Endopterygota</taxon>
        <taxon>Diptera</taxon>
        <taxon>Brachycera</taxon>
        <taxon>Muscomorpha</taxon>
        <taxon>Ephydroidea</taxon>
        <taxon>Drosophilidae</taxon>
        <taxon>Drosophila</taxon>
        <taxon>Sophophora</taxon>
    </lineage>
</organism>
<keyword id="KW-0002">3D-structure</keyword>
<keyword id="KW-0025">Alternative splicing</keyword>
<keyword id="KW-0505">Motor protein</keyword>
<keyword id="KW-0514">Muscle protein</keyword>
<keyword id="KW-0518">Myosin</keyword>
<keyword id="KW-1185">Reference proteome</keyword>
<keyword id="KW-0677">Repeat</keyword>
<name>MLC1_DROME</name>
<dbReference type="EMBL" id="M10125">
    <property type="protein sequence ID" value="AAA28711.1"/>
    <property type="molecule type" value="Genomic_DNA"/>
</dbReference>
<dbReference type="EMBL" id="M10125">
    <property type="protein sequence ID" value="AAA28712.1"/>
    <property type="molecule type" value="Genomic_DNA"/>
</dbReference>
<dbReference type="EMBL" id="K01567">
    <property type="protein sequence ID" value="AAA28710.1"/>
    <property type="molecule type" value="mRNA"/>
</dbReference>
<dbReference type="EMBL" id="AE014297">
    <property type="protein sequence ID" value="AAF56733.2"/>
    <property type="molecule type" value="Genomic_DNA"/>
</dbReference>
<dbReference type="EMBL" id="AE014297">
    <property type="protein sequence ID" value="AAN14121.1"/>
    <property type="molecule type" value="Genomic_DNA"/>
</dbReference>
<dbReference type="EMBL" id="AY070972">
    <property type="protein sequence ID" value="AAL48594.1"/>
    <property type="molecule type" value="mRNA"/>
</dbReference>
<dbReference type="EMBL" id="L37312">
    <property type="protein sequence ID" value="AAA53441.1"/>
    <property type="molecule type" value="Genomic_DNA"/>
</dbReference>
<dbReference type="EMBL" id="L37312">
    <property type="protein sequence ID" value="AAA53442.1"/>
    <property type="molecule type" value="Genomic_DNA"/>
</dbReference>
<dbReference type="EMBL" id="L37313">
    <property type="protein sequence ID" value="AAA53443.1"/>
    <property type="molecule type" value="Genomic_DNA"/>
</dbReference>
<dbReference type="EMBL" id="L37313">
    <property type="protein sequence ID" value="AAA53444.1"/>
    <property type="molecule type" value="Genomic_DNA"/>
</dbReference>
<dbReference type="EMBL" id="L37314">
    <property type="protein sequence ID" value="AAA53445.1"/>
    <property type="molecule type" value="Genomic_DNA"/>
</dbReference>
<dbReference type="EMBL" id="L37314">
    <property type="protein sequence ID" value="AAA53446.1"/>
    <property type="molecule type" value="Genomic_DNA"/>
</dbReference>
<dbReference type="EMBL" id="L37315">
    <property type="protein sequence ID" value="AAA53447.1"/>
    <property type="status" value="ALT_SEQ"/>
    <property type="molecule type" value="Genomic_DNA"/>
</dbReference>
<dbReference type="EMBL" id="L37315">
    <property type="protein sequence ID" value="AAA53448.1"/>
    <property type="status" value="ALT_SEQ"/>
    <property type="molecule type" value="Genomic_DNA"/>
</dbReference>
<dbReference type="EMBL" id="L37316">
    <property type="protein sequence ID" value="AAA56798.1"/>
    <property type="molecule type" value="Genomic_DNA"/>
</dbReference>
<dbReference type="EMBL" id="L37316">
    <property type="protein sequence ID" value="AAA56799.1"/>
    <property type="status" value="ALT_SEQ"/>
    <property type="molecule type" value="Genomic_DNA"/>
</dbReference>
<dbReference type="EMBL" id="L37317">
    <property type="protein sequence ID" value="AAA53449.1"/>
    <property type="molecule type" value="Genomic_DNA"/>
</dbReference>
<dbReference type="EMBL" id="L37317">
    <property type="protein sequence ID" value="AAA53450.1"/>
    <property type="molecule type" value="Genomic_DNA"/>
</dbReference>
<dbReference type="EMBL" id="L37318">
    <property type="protein sequence ID" value="AAA53451.1"/>
    <property type="molecule type" value="Genomic_DNA"/>
</dbReference>
<dbReference type="EMBL" id="L37318">
    <property type="protein sequence ID" value="AAA53452.1"/>
    <property type="molecule type" value="Genomic_DNA"/>
</dbReference>
<dbReference type="EMBL" id="L37319">
    <property type="protein sequence ID" value="AAA53453.1"/>
    <property type="molecule type" value="Genomic_DNA"/>
</dbReference>
<dbReference type="EMBL" id="L37319">
    <property type="protein sequence ID" value="AAA53454.1"/>
    <property type="molecule type" value="Genomic_DNA"/>
</dbReference>
<dbReference type="EMBL" id="L37320">
    <property type="protein sequence ID" value="AAA53455.1"/>
    <property type="molecule type" value="Genomic_DNA"/>
</dbReference>
<dbReference type="EMBL" id="L37320">
    <property type="protein sequence ID" value="AAA53456.1"/>
    <property type="molecule type" value="Genomic_DNA"/>
</dbReference>
<dbReference type="EMBL" id="L37321">
    <property type="protein sequence ID" value="AAA53457.1"/>
    <property type="molecule type" value="Genomic_DNA"/>
</dbReference>
<dbReference type="EMBL" id="L37321">
    <property type="protein sequence ID" value="AAA53458.1"/>
    <property type="molecule type" value="Genomic_DNA"/>
</dbReference>
<dbReference type="EMBL" id="L37322">
    <property type="protein sequence ID" value="AAA53459.1"/>
    <property type="molecule type" value="Genomic_DNA"/>
</dbReference>
<dbReference type="EMBL" id="L37322">
    <property type="protein sequence ID" value="AAA53460.1"/>
    <property type="molecule type" value="Genomic_DNA"/>
</dbReference>
<dbReference type="EMBL" id="L37323">
    <property type="protein sequence ID" value="AAA53461.1"/>
    <property type="molecule type" value="Genomic_DNA"/>
</dbReference>
<dbReference type="EMBL" id="L37323">
    <property type="protein sequence ID" value="AAA53462.1"/>
    <property type="molecule type" value="Genomic_DNA"/>
</dbReference>
<dbReference type="EMBL" id="L37324">
    <property type="protein sequence ID" value="AAA53463.1"/>
    <property type="molecule type" value="Genomic_DNA"/>
</dbReference>
<dbReference type="EMBL" id="L37324">
    <property type="protein sequence ID" value="AAA53464.1"/>
    <property type="molecule type" value="Genomic_DNA"/>
</dbReference>
<dbReference type="EMBL" id="L37325">
    <property type="protein sequence ID" value="AAA53465.1"/>
    <property type="molecule type" value="Genomic_DNA"/>
</dbReference>
<dbReference type="EMBL" id="L37325">
    <property type="protein sequence ID" value="AAA53466.1"/>
    <property type="molecule type" value="Genomic_DNA"/>
</dbReference>
<dbReference type="EMBL" id="L37326">
    <property type="protein sequence ID" value="AAA53467.1"/>
    <property type="molecule type" value="Genomic_DNA"/>
</dbReference>
<dbReference type="EMBL" id="L37326">
    <property type="protein sequence ID" value="AAA53468.1"/>
    <property type="molecule type" value="Genomic_DNA"/>
</dbReference>
<dbReference type="EMBL" id="L37327">
    <property type="protein sequence ID" value="AAA53469.1"/>
    <property type="molecule type" value="Genomic_DNA"/>
</dbReference>
<dbReference type="EMBL" id="L37327">
    <property type="protein sequence ID" value="AAA53470.1"/>
    <property type="molecule type" value="Genomic_DNA"/>
</dbReference>
<dbReference type="RefSeq" id="NP_001287569.1">
    <molecule id="P06742-1"/>
    <property type="nucleotide sequence ID" value="NM_001300640.1"/>
</dbReference>
<dbReference type="RefSeq" id="NP_476639.1">
    <molecule id="P06742-2"/>
    <property type="nucleotide sequence ID" value="NM_057291.4"/>
</dbReference>
<dbReference type="RefSeq" id="NP_476640.1">
    <molecule id="P06742-1"/>
    <property type="nucleotide sequence ID" value="NM_057292.4"/>
</dbReference>
<dbReference type="PDB" id="5W1A">
    <property type="method" value="X-ray"/>
    <property type="resolution" value="2.23 A"/>
    <property type="chains" value="B/D=1-151"/>
</dbReference>
<dbReference type="PDB" id="8EXW">
    <property type="method" value="X-ray"/>
    <property type="resolution" value="2.50 A"/>
    <property type="chains" value="B=1-151"/>
</dbReference>
<dbReference type="PDBsum" id="5W1A"/>
<dbReference type="PDBsum" id="8EXW"/>
<dbReference type="SMR" id="P06742"/>
<dbReference type="BioGRID" id="68205">
    <property type="interactions" value="47"/>
</dbReference>
<dbReference type="DIP" id="DIP-23903N"/>
<dbReference type="FunCoup" id="P06742">
    <property type="interactions" value="21"/>
</dbReference>
<dbReference type="IntAct" id="P06742">
    <property type="interactions" value="115"/>
</dbReference>
<dbReference type="STRING" id="7227.FBpp0310544"/>
<dbReference type="PaxDb" id="7227-FBpp0084565"/>
<dbReference type="DNASU" id="43323"/>
<dbReference type="EnsemblMetazoa" id="FBtr0085195">
    <molecule id="P06742-2"/>
    <property type="protein sequence ID" value="FBpp0084565"/>
    <property type="gene ID" value="FBgn0002772"/>
</dbReference>
<dbReference type="EnsemblMetazoa" id="FBtr0085196">
    <molecule id="P06742-1"/>
    <property type="protein sequence ID" value="FBpp0084566"/>
    <property type="gene ID" value="FBgn0002772"/>
</dbReference>
<dbReference type="EnsemblMetazoa" id="FBtr0344131">
    <molecule id="P06742-1"/>
    <property type="protein sequence ID" value="FBpp0310544"/>
    <property type="gene ID" value="FBgn0002772"/>
</dbReference>
<dbReference type="GeneID" id="43323"/>
<dbReference type="KEGG" id="dme:Dmel_CG5596"/>
<dbReference type="AGR" id="FB:FBgn0002772"/>
<dbReference type="CTD" id="23209"/>
<dbReference type="FlyBase" id="FBgn0002772">
    <property type="gene designation" value="Mlc1"/>
</dbReference>
<dbReference type="VEuPathDB" id="VectorBase:FBgn0002772"/>
<dbReference type="eggNOG" id="KOG0030">
    <property type="taxonomic scope" value="Eukaryota"/>
</dbReference>
<dbReference type="GeneTree" id="ENSGT01030000234570"/>
<dbReference type="HOGENOM" id="CLU_061288_13_3_1"/>
<dbReference type="InParanoid" id="P06742"/>
<dbReference type="OMA" id="EEWMPIY"/>
<dbReference type="OrthoDB" id="26525at2759"/>
<dbReference type="PhylomeDB" id="P06742"/>
<dbReference type="SignaLink" id="P06742"/>
<dbReference type="BioGRID-ORCS" id="43323">
    <property type="hits" value="0 hits in 3 CRISPR screens"/>
</dbReference>
<dbReference type="ChiTaRS" id="Mlc1">
    <property type="organism name" value="fly"/>
</dbReference>
<dbReference type="GenomeRNAi" id="43323"/>
<dbReference type="PRO" id="PR:P06742"/>
<dbReference type="Proteomes" id="UP000000803">
    <property type="component" value="Chromosome 3R"/>
</dbReference>
<dbReference type="Bgee" id="FBgn0002772">
    <property type="expression patterns" value="Expressed in oviduct (Drosophila) and 118 other cell types or tissues"/>
</dbReference>
<dbReference type="ExpressionAtlas" id="P06742">
    <property type="expression patterns" value="baseline and differential"/>
</dbReference>
<dbReference type="GO" id="GO:0005829">
    <property type="term" value="C:cytosol"/>
    <property type="evidence" value="ECO:0007005"/>
    <property type="project" value="FlyBase"/>
</dbReference>
<dbReference type="GO" id="GO:0005859">
    <property type="term" value="C:muscle myosin complex"/>
    <property type="evidence" value="ECO:0000314"/>
    <property type="project" value="UniProtKB"/>
</dbReference>
<dbReference type="GO" id="GO:0005509">
    <property type="term" value="F:calcium ion binding"/>
    <property type="evidence" value="ECO:0007669"/>
    <property type="project" value="InterPro"/>
</dbReference>
<dbReference type="GO" id="GO:0030234">
    <property type="term" value="F:enzyme regulator activity"/>
    <property type="evidence" value="ECO:0000303"/>
    <property type="project" value="UniProtKB"/>
</dbReference>
<dbReference type="GO" id="GO:0032036">
    <property type="term" value="F:myosin heavy chain binding"/>
    <property type="evidence" value="ECO:0000303"/>
    <property type="project" value="UniProtKB"/>
</dbReference>
<dbReference type="GO" id="GO:0007498">
    <property type="term" value="P:mesoderm development"/>
    <property type="evidence" value="ECO:0000270"/>
    <property type="project" value="FlyBase"/>
</dbReference>
<dbReference type="GO" id="GO:0006936">
    <property type="term" value="P:muscle contraction"/>
    <property type="evidence" value="ECO:0000303"/>
    <property type="project" value="UniProtKB"/>
</dbReference>
<dbReference type="GO" id="GO:0050790">
    <property type="term" value="P:regulation of catalytic activity"/>
    <property type="evidence" value="ECO:0000303"/>
    <property type="project" value="UniProtKB"/>
</dbReference>
<dbReference type="FunFam" id="1.10.238.10:FF:000286">
    <property type="entry name" value="Myosin alkali light chain 1"/>
    <property type="match status" value="1"/>
</dbReference>
<dbReference type="FunFam" id="1.10.238.10:FF:000267">
    <property type="entry name" value="Myosin light chain alkali"/>
    <property type="match status" value="1"/>
</dbReference>
<dbReference type="Gene3D" id="1.10.238.10">
    <property type="entry name" value="EF-hand"/>
    <property type="match status" value="2"/>
</dbReference>
<dbReference type="InterPro" id="IPR050230">
    <property type="entry name" value="CALM/Myosin/TropC-like"/>
</dbReference>
<dbReference type="InterPro" id="IPR011992">
    <property type="entry name" value="EF-hand-dom_pair"/>
</dbReference>
<dbReference type="InterPro" id="IPR002048">
    <property type="entry name" value="EF_hand_dom"/>
</dbReference>
<dbReference type="PANTHER" id="PTHR23048">
    <property type="entry name" value="MYOSIN LIGHT CHAIN 1, 3"/>
    <property type="match status" value="1"/>
</dbReference>
<dbReference type="PANTHER" id="PTHR23048:SF33">
    <property type="entry name" value="MYOSIN LIGHT CHAIN ALKALI"/>
    <property type="match status" value="1"/>
</dbReference>
<dbReference type="Pfam" id="PF13499">
    <property type="entry name" value="EF-hand_7"/>
    <property type="match status" value="1"/>
</dbReference>
<dbReference type="SUPFAM" id="SSF47473">
    <property type="entry name" value="EF-hand"/>
    <property type="match status" value="1"/>
</dbReference>
<dbReference type="PROSITE" id="PS50222">
    <property type="entry name" value="EF_HAND_2"/>
    <property type="match status" value="2"/>
</dbReference>
<protein>
    <recommendedName>
        <fullName>Myosin light chain alkali</fullName>
    </recommendedName>
</protein>
<sequence length="155" mass="17524">MADVPKREVENVEFVFEVMGSPGEGIDAVDLGDALRALNLNPTLALIEKLGGTKKRNEKKIKLDEFLPIYSQVKKEKEQGCYEDFIECLKLYDKEENGTMLLAELQHALLALGESLDDEQVETLFADCMDPEDDEGFIPYSQFVQRLMSDPVVFD</sequence>